<dbReference type="EMBL" id="CP000678">
    <property type="protein sequence ID" value="ABQ87106.1"/>
    <property type="molecule type" value="Genomic_DNA"/>
</dbReference>
<dbReference type="RefSeq" id="WP_004033029.1">
    <property type="nucleotide sequence ID" value="NZ_CP117965.1"/>
</dbReference>
<dbReference type="SMR" id="A5ULM8"/>
<dbReference type="STRING" id="420247.Msm_0901"/>
<dbReference type="EnsemblBacteria" id="ABQ87106">
    <property type="protein sequence ID" value="ABQ87106"/>
    <property type="gene ID" value="Msm_0901"/>
</dbReference>
<dbReference type="KEGG" id="msi:Msm_0901"/>
<dbReference type="PATRIC" id="fig|420247.28.peg.898"/>
<dbReference type="eggNOG" id="arCOG04255">
    <property type="taxonomic scope" value="Archaea"/>
</dbReference>
<dbReference type="HOGENOM" id="CLU_115574_0_1_2"/>
<dbReference type="Proteomes" id="UP000001992">
    <property type="component" value="Chromosome"/>
</dbReference>
<dbReference type="GO" id="GO:0015935">
    <property type="term" value="C:small ribosomal subunit"/>
    <property type="evidence" value="ECO:0007669"/>
    <property type="project" value="InterPro"/>
</dbReference>
<dbReference type="GO" id="GO:0019843">
    <property type="term" value="F:rRNA binding"/>
    <property type="evidence" value="ECO:0007669"/>
    <property type="project" value="UniProtKB-UniRule"/>
</dbReference>
<dbReference type="GO" id="GO:0003735">
    <property type="term" value="F:structural constituent of ribosome"/>
    <property type="evidence" value="ECO:0007669"/>
    <property type="project" value="InterPro"/>
</dbReference>
<dbReference type="GO" id="GO:0006412">
    <property type="term" value="P:translation"/>
    <property type="evidence" value="ECO:0007669"/>
    <property type="project" value="UniProtKB-UniRule"/>
</dbReference>
<dbReference type="CDD" id="cd03367">
    <property type="entry name" value="Ribosomal_S23"/>
    <property type="match status" value="1"/>
</dbReference>
<dbReference type="FunFam" id="2.40.50.140:FF:000007">
    <property type="entry name" value="40S ribosomal protein S23"/>
    <property type="match status" value="1"/>
</dbReference>
<dbReference type="Gene3D" id="2.40.50.140">
    <property type="entry name" value="Nucleic acid-binding proteins"/>
    <property type="match status" value="1"/>
</dbReference>
<dbReference type="HAMAP" id="MF_00403_A">
    <property type="entry name" value="Ribosomal_uS12_A"/>
    <property type="match status" value="1"/>
</dbReference>
<dbReference type="InterPro" id="IPR012340">
    <property type="entry name" value="NA-bd_OB-fold"/>
</dbReference>
<dbReference type="InterPro" id="IPR006032">
    <property type="entry name" value="Ribosomal_uS12"/>
</dbReference>
<dbReference type="InterPro" id="IPR022863">
    <property type="entry name" value="Ribosomal_uS12_arc"/>
</dbReference>
<dbReference type="InterPro" id="IPR005680">
    <property type="entry name" value="Ribosomal_uS12_euk/arc"/>
</dbReference>
<dbReference type="NCBIfam" id="NF003254">
    <property type="entry name" value="PRK04211.1"/>
    <property type="match status" value="1"/>
</dbReference>
<dbReference type="NCBIfam" id="TIGR00982">
    <property type="entry name" value="uS12_E_A"/>
    <property type="match status" value="1"/>
</dbReference>
<dbReference type="PANTHER" id="PTHR11652">
    <property type="entry name" value="30S RIBOSOMAL PROTEIN S12 FAMILY MEMBER"/>
    <property type="match status" value="1"/>
</dbReference>
<dbReference type="Pfam" id="PF00164">
    <property type="entry name" value="Ribosom_S12_S23"/>
    <property type="match status" value="1"/>
</dbReference>
<dbReference type="PIRSF" id="PIRSF002133">
    <property type="entry name" value="Ribosomal_S12/S23"/>
    <property type="match status" value="1"/>
</dbReference>
<dbReference type="SUPFAM" id="SSF50249">
    <property type="entry name" value="Nucleic acid-binding proteins"/>
    <property type="match status" value="1"/>
</dbReference>
<dbReference type="PROSITE" id="PS00055">
    <property type="entry name" value="RIBOSOMAL_S12"/>
    <property type="match status" value="1"/>
</dbReference>
<reference key="1">
    <citation type="journal article" date="2007" name="Proc. Natl. Acad. Sci. U.S.A.">
        <title>Genomic and metabolic adaptations of Methanobrevibacter smithii to the human gut.</title>
        <authorList>
            <person name="Samuel B.S."/>
            <person name="Hansen E.E."/>
            <person name="Manchester J.K."/>
            <person name="Coutinho P.M."/>
            <person name="Henrissat B."/>
            <person name="Fulton R."/>
            <person name="Latreille P."/>
            <person name="Kim K."/>
            <person name="Wilson R.K."/>
            <person name="Gordon J.I."/>
        </authorList>
    </citation>
    <scope>NUCLEOTIDE SEQUENCE [LARGE SCALE GENOMIC DNA]</scope>
    <source>
        <strain>ATCC 35061 / DSM 861 / OCM 144 / PS</strain>
    </source>
</reference>
<sequence>MPGLFAAKKLKKNRQNFKWKDVDYKRKALRLDVKADPLEGAPQARGIVIEKVGIEAKQPNSAIRKCVRVQLIKNGKQLTAFAPGDGAIGFIDEHDEVMIEGIGGPSGRSMGDIPGVRWKVSKVNNVALSEMVSGKIEKPVR</sequence>
<evidence type="ECO:0000255" key="1">
    <source>
        <dbReference type="HAMAP-Rule" id="MF_00403"/>
    </source>
</evidence>
<evidence type="ECO:0000305" key="2"/>
<name>RS12_METS3</name>
<protein>
    <recommendedName>
        <fullName evidence="1">Small ribosomal subunit protein uS12</fullName>
    </recommendedName>
    <alternativeName>
        <fullName evidence="2">30S ribosomal protein S12</fullName>
    </alternativeName>
</protein>
<proteinExistence type="inferred from homology"/>
<feature type="chain" id="PRO_1000049795" description="Small ribosomal subunit protein uS12">
    <location>
        <begin position="1"/>
        <end position="141"/>
    </location>
</feature>
<comment type="function">
    <text evidence="1">With S4 and S5 plays an important role in translational accuracy. Located at the interface of the 30S and 50S subunits.</text>
</comment>
<comment type="subunit">
    <text evidence="1">Part of the 30S ribosomal subunit.</text>
</comment>
<comment type="similarity">
    <text evidence="1">Belongs to the universal ribosomal protein uS12 family.</text>
</comment>
<keyword id="KW-0687">Ribonucleoprotein</keyword>
<keyword id="KW-0689">Ribosomal protein</keyword>
<keyword id="KW-0694">RNA-binding</keyword>
<keyword id="KW-0699">rRNA-binding</keyword>
<accession>A5ULM8</accession>
<gene>
    <name evidence="1" type="primary">rps12</name>
    <name type="ordered locus">Msm_0901</name>
</gene>
<organism>
    <name type="scientific">Methanobrevibacter smithii (strain ATCC 35061 / DSM 861 / OCM 144 / PS)</name>
    <dbReference type="NCBI Taxonomy" id="420247"/>
    <lineage>
        <taxon>Archaea</taxon>
        <taxon>Methanobacteriati</taxon>
        <taxon>Methanobacteriota</taxon>
        <taxon>Methanomada group</taxon>
        <taxon>Methanobacteria</taxon>
        <taxon>Methanobacteriales</taxon>
        <taxon>Methanobacteriaceae</taxon>
        <taxon>Methanobrevibacter</taxon>
    </lineage>
</organism>